<reference key="1">
    <citation type="journal article" date="2004" name="J. Bacteriol.">
        <title>Complete genome sequence of the genetically tractable hydrogenotrophic methanogen Methanococcus maripaludis.</title>
        <authorList>
            <person name="Hendrickson E.L."/>
            <person name="Kaul R."/>
            <person name="Zhou Y."/>
            <person name="Bovee D."/>
            <person name="Chapman P."/>
            <person name="Chung J."/>
            <person name="Conway de Macario E."/>
            <person name="Dodsworth J.A."/>
            <person name="Gillett W."/>
            <person name="Graham D.E."/>
            <person name="Hackett M."/>
            <person name="Haydock A.K."/>
            <person name="Kang A."/>
            <person name="Land M.L."/>
            <person name="Levy R."/>
            <person name="Lie T.J."/>
            <person name="Major T.A."/>
            <person name="Moore B.C."/>
            <person name="Porat I."/>
            <person name="Palmeiri A."/>
            <person name="Rouse G."/>
            <person name="Saenphimmachak C."/>
            <person name="Soell D."/>
            <person name="Van Dien S."/>
            <person name="Wang T."/>
            <person name="Whitman W.B."/>
            <person name="Xia Q."/>
            <person name="Zhang Y."/>
            <person name="Larimer F.W."/>
            <person name="Olson M.V."/>
            <person name="Leigh J.A."/>
        </authorList>
    </citation>
    <scope>NUCLEOTIDE SEQUENCE [LARGE SCALE GENOMIC DNA]</scope>
    <source>
        <strain>DSM 14266 / JCM 13030 / NBRC 101832 / S2 / LL</strain>
    </source>
</reference>
<protein>
    <recommendedName>
        <fullName evidence="1">Large ribosomal subunit protein eL34</fullName>
    </recommendedName>
    <alternativeName>
        <fullName evidence="3">50S ribosomal protein L34e</fullName>
    </alternativeName>
</protein>
<gene>
    <name evidence="1" type="primary">rpl34e</name>
    <name type="ordered locus">MMP0627</name>
</gene>
<organism>
    <name type="scientific">Methanococcus maripaludis (strain DSM 14266 / JCM 13030 / NBRC 101832 / S2 / LL)</name>
    <dbReference type="NCBI Taxonomy" id="267377"/>
    <lineage>
        <taxon>Archaea</taxon>
        <taxon>Methanobacteriati</taxon>
        <taxon>Methanobacteriota</taxon>
        <taxon>Methanomada group</taxon>
        <taxon>Methanococci</taxon>
        <taxon>Methanococcales</taxon>
        <taxon>Methanococcaceae</taxon>
        <taxon>Methanococcus</taxon>
    </lineage>
</organism>
<sequence>MPAPRYKSGSSKKVYRKAPGNSSIVHYRRKKQSKAVCGACGALLNGVPRGRAVEITKLAKTEKRPERPFGGNLCPKCVKKMMVAKARNF</sequence>
<keyword id="KW-1185">Reference proteome</keyword>
<keyword id="KW-0687">Ribonucleoprotein</keyword>
<keyword id="KW-0689">Ribosomal protein</keyword>
<dbReference type="EMBL" id="BX950229">
    <property type="protein sequence ID" value="CAF30183.1"/>
    <property type="molecule type" value="Genomic_DNA"/>
</dbReference>
<dbReference type="RefSeq" id="WP_011170571.1">
    <property type="nucleotide sequence ID" value="NC_005791.1"/>
</dbReference>
<dbReference type="SMR" id="Q6LZK0"/>
<dbReference type="STRING" id="267377.MMP0627"/>
<dbReference type="DNASU" id="2761599"/>
<dbReference type="EnsemblBacteria" id="CAF30183">
    <property type="protein sequence ID" value="CAF30183"/>
    <property type="gene ID" value="MMP0627"/>
</dbReference>
<dbReference type="KEGG" id="mmp:MMP0627"/>
<dbReference type="PATRIC" id="fig|267377.15.peg.642"/>
<dbReference type="eggNOG" id="arCOG04168">
    <property type="taxonomic scope" value="Archaea"/>
</dbReference>
<dbReference type="HOGENOM" id="CLU_118652_2_0_2"/>
<dbReference type="OrthoDB" id="43096at2157"/>
<dbReference type="Proteomes" id="UP000000590">
    <property type="component" value="Chromosome"/>
</dbReference>
<dbReference type="GO" id="GO:1990904">
    <property type="term" value="C:ribonucleoprotein complex"/>
    <property type="evidence" value="ECO:0007669"/>
    <property type="project" value="UniProtKB-KW"/>
</dbReference>
<dbReference type="GO" id="GO:0005840">
    <property type="term" value="C:ribosome"/>
    <property type="evidence" value="ECO:0007669"/>
    <property type="project" value="UniProtKB-KW"/>
</dbReference>
<dbReference type="GO" id="GO:0003735">
    <property type="term" value="F:structural constituent of ribosome"/>
    <property type="evidence" value="ECO:0007669"/>
    <property type="project" value="InterPro"/>
</dbReference>
<dbReference type="GO" id="GO:0006412">
    <property type="term" value="P:translation"/>
    <property type="evidence" value="ECO:0007669"/>
    <property type="project" value="UniProtKB-UniRule"/>
</dbReference>
<dbReference type="Gene3D" id="6.20.340.10">
    <property type="match status" value="1"/>
</dbReference>
<dbReference type="HAMAP" id="MF_00349">
    <property type="entry name" value="Ribosomal_eL34"/>
    <property type="match status" value="1"/>
</dbReference>
<dbReference type="InterPro" id="IPR008195">
    <property type="entry name" value="Ribosomal_eL34"/>
</dbReference>
<dbReference type="InterPro" id="IPR038562">
    <property type="entry name" value="Ribosomal_eL34_C_sf"/>
</dbReference>
<dbReference type="InterPro" id="IPR047868">
    <property type="entry name" value="Ribosomal_L34e_arc-type"/>
</dbReference>
<dbReference type="NCBIfam" id="NF003143">
    <property type="entry name" value="PRK04059.1"/>
    <property type="match status" value="1"/>
</dbReference>
<dbReference type="PANTHER" id="PTHR10759">
    <property type="entry name" value="60S RIBOSOMAL PROTEIN L34"/>
    <property type="match status" value="1"/>
</dbReference>
<dbReference type="Pfam" id="PF01199">
    <property type="entry name" value="Ribosomal_L34e"/>
    <property type="match status" value="1"/>
</dbReference>
<dbReference type="PRINTS" id="PR01250">
    <property type="entry name" value="RIBOSOMALL34"/>
</dbReference>
<comment type="similarity">
    <text evidence="1">Belongs to the eukaryotic ribosomal protein eL34 family.</text>
</comment>
<proteinExistence type="inferred from homology"/>
<name>RL34_METMP</name>
<accession>Q6LZK0</accession>
<feature type="chain" id="PRO_1000133411" description="Large ribosomal subunit protein eL34">
    <location>
        <begin position="1"/>
        <end position="89"/>
    </location>
</feature>
<feature type="region of interest" description="Disordered" evidence="2">
    <location>
        <begin position="1"/>
        <end position="22"/>
    </location>
</feature>
<evidence type="ECO:0000255" key="1">
    <source>
        <dbReference type="HAMAP-Rule" id="MF_00349"/>
    </source>
</evidence>
<evidence type="ECO:0000256" key="2">
    <source>
        <dbReference type="SAM" id="MobiDB-lite"/>
    </source>
</evidence>
<evidence type="ECO:0000305" key="3"/>